<name>HSLO_CITBB</name>
<evidence type="ECO:0000255" key="1">
    <source>
        <dbReference type="HAMAP-Rule" id="MF_00117"/>
    </source>
</evidence>
<sequence length="295" mass="31612">MTDYLVRAIAKSGSVRALACVTTATVGAICKRHDTLPTATAALGRGITAGALMGALLKTGQRVAMRFEGNGPLKKIVIEADANGSVRGYVGDPKVHLLRPDGALDVNNALGRAGFLTVAKDLGLKEPYRGTVQLYTSGIAEDLALYLVESEQIPSAVGIAEFIEQDGTVAAAGGFLIQAVPPVDPLVIEELMTRIEQLPPLSELLHKGGNPEQILEQLLAGIPYDILEKRNIAFACSCSRERIERVLLSMGKKELSSMKKDQHGSEVTCEFCGEHYLFDEADLDRIIAEIAKQEG</sequence>
<protein>
    <recommendedName>
        <fullName evidence="1">33 kDa chaperonin</fullName>
    </recommendedName>
    <alternativeName>
        <fullName evidence="1">Heat shock protein 33 homolog</fullName>
        <shortName evidence="1">HSP33</shortName>
    </alternativeName>
</protein>
<dbReference type="EMBL" id="CP001124">
    <property type="protein sequence ID" value="ACH40546.1"/>
    <property type="molecule type" value="Genomic_DNA"/>
</dbReference>
<dbReference type="RefSeq" id="WP_012531983.1">
    <property type="nucleotide sequence ID" value="NC_011146.1"/>
</dbReference>
<dbReference type="SMR" id="B5EC90"/>
<dbReference type="STRING" id="404380.Gbem_3554"/>
<dbReference type="KEGG" id="gbm:Gbem_3554"/>
<dbReference type="eggNOG" id="COG1281">
    <property type="taxonomic scope" value="Bacteria"/>
</dbReference>
<dbReference type="HOGENOM" id="CLU_054493_1_0_7"/>
<dbReference type="OrthoDB" id="9793753at2"/>
<dbReference type="Proteomes" id="UP000008825">
    <property type="component" value="Chromosome"/>
</dbReference>
<dbReference type="GO" id="GO:0005737">
    <property type="term" value="C:cytoplasm"/>
    <property type="evidence" value="ECO:0007669"/>
    <property type="project" value="UniProtKB-SubCell"/>
</dbReference>
<dbReference type="GO" id="GO:0044183">
    <property type="term" value="F:protein folding chaperone"/>
    <property type="evidence" value="ECO:0007669"/>
    <property type="project" value="TreeGrafter"/>
</dbReference>
<dbReference type="GO" id="GO:0051082">
    <property type="term" value="F:unfolded protein binding"/>
    <property type="evidence" value="ECO:0007669"/>
    <property type="project" value="UniProtKB-UniRule"/>
</dbReference>
<dbReference type="GO" id="GO:0042026">
    <property type="term" value="P:protein refolding"/>
    <property type="evidence" value="ECO:0007669"/>
    <property type="project" value="TreeGrafter"/>
</dbReference>
<dbReference type="CDD" id="cd00498">
    <property type="entry name" value="Hsp33"/>
    <property type="match status" value="1"/>
</dbReference>
<dbReference type="Gene3D" id="3.55.30.10">
    <property type="entry name" value="Hsp33 domain"/>
    <property type="match status" value="1"/>
</dbReference>
<dbReference type="Gene3D" id="3.90.1280.10">
    <property type="entry name" value="HSP33 redox switch-like"/>
    <property type="match status" value="1"/>
</dbReference>
<dbReference type="HAMAP" id="MF_00117">
    <property type="entry name" value="HslO"/>
    <property type="match status" value="1"/>
</dbReference>
<dbReference type="InterPro" id="IPR000397">
    <property type="entry name" value="Heat_shock_Hsp33"/>
</dbReference>
<dbReference type="InterPro" id="IPR016154">
    <property type="entry name" value="Heat_shock_Hsp33_C"/>
</dbReference>
<dbReference type="InterPro" id="IPR016153">
    <property type="entry name" value="Heat_shock_Hsp33_N"/>
</dbReference>
<dbReference type="NCBIfam" id="NF001033">
    <property type="entry name" value="PRK00114.1"/>
    <property type="match status" value="1"/>
</dbReference>
<dbReference type="PANTHER" id="PTHR30111">
    <property type="entry name" value="33 KDA CHAPERONIN"/>
    <property type="match status" value="1"/>
</dbReference>
<dbReference type="PANTHER" id="PTHR30111:SF1">
    <property type="entry name" value="33 KDA CHAPERONIN"/>
    <property type="match status" value="1"/>
</dbReference>
<dbReference type="Pfam" id="PF01430">
    <property type="entry name" value="HSP33"/>
    <property type="match status" value="1"/>
</dbReference>
<dbReference type="PIRSF" id="PIRSF005261">
    <property type="entry name" value="Heat_shock_Hsp33"/>
    <property type="match status" value="1"/>
</dbReference>
<dbReference type="SUPFAM" id="SSF64397">
    <property type="entry name" value="Hsp33 domain"/>
    <property type="match status" value="1"/>
</dbReference>
<dbReference type="SUPFAM" id="SSF118352">
    <property type="entry name" value="HSP33 redox switch-like"/>
    <property type="match status" value="1"/>
</dbReference>
<proteinExistence type="inferred from homology"/>
<feature type="chain" id="PRO_1000095019" description="33 kDa chaperonin">
    <location>
        <begin position="1"/>
        <end position="295"/>
    </location>
</feature>
<feature type="disulfide bond" description="Redox-active" evidence="1">
    <location>
        <begin position="236"/>
        <end position="238"/>
    </location>
</feature>
<feature type="disulfide bond" description="Redox-active" evidence="1">
    <location>
        <begin position="269"/>
        <end position="272"/>
    </location>
</feature>
<organism>
    <name type="scientific">Citrifermentans bemidjiense (strain ATCC BAA-1014 / DSM 16622 / JCM 12645 / Bem)</name>
    <name type="common">Geobacter bemidjiensis</name>
    <dbReference type="NCBI Taxonomy" id="404380"/>
    <lineage>
        <taxon>Bacteria</taxon>
        <taxon>Pseudomonadati</taxon>
        <taxon>Thermodesulfobacteriota</taxon>
        <taxon>Desulfuromonadia</taxon>
        <taxon>Geobacterales</taxon>
        <taxon>Geobacteraceae</taxon>
        <taxon>Citrifermentans</taxon>
    </lineage>
</organism>
<accession>B5EC90</accession>
<keyword id="KW-0143">Chaperone</keyword>
<keyword id="KW-0963">Cytoplasm</keyword>
<keyword id="KW-1015">Disulfide bond</keyword>
<keyword id="KW-0676">Redox-active center</keyword>
<keyword id="KW-1185">Reference proteome</keyword>
<keyword id="KW-0862">Zinc</keyword>
<reference key="1">
    <citation type="submission" date="2008-07" db="EMBL/GenBank/DDBJ databases">
        <title>Complete sequence of Geobacter bemidjiensis BEM.</title>
        <authorList>
            <consortium name="US DOE Joint Genome Institute"/>
            <person name="Lucas S."/>
            <person name="Copeland A."/>
            <person name="Lapidus A."/>
            <person name="Glavina del Rio T."/>
            <person name="Dalin E."/>
            <person name="Tice H."/>
            <person name="Bruce D."/>
            <person name="Goodwin L."/>
            <person name="Pitluck S."/>
            <person name="Kiss H."/>
            <person name="Brettin T."/>
            <person name="Detter J.C."/>
            <person name="Han C."/>
            <person name="Kuske C.R."/>
            <person name="Schmutz J."/>
            <person name="Larimer F."/>
            <person name="Land M."/>
            <person name="Hauser L."/>
            <person name="Kyrpides N."/>
            <person name="Lykidis A."/>
            <person name="Lovley D."/>
            <person name="Richardson P."/>
        </authorList>
    </citation>
    <scope>NUCLEOTIDE SEQUENCE [LARGE SCALE GENOMIC DNA]</scope>
    <source>
        <strain>ATCC BAA-1014 / DSM 16622 / JCM 12645 / Bem</strain>
    </source>
</reference>
<comment type="function">
    <text evidence="1">Redox regulated molecular chaperone. Protects both thermally unfolding and oxidatively damaged proteins from irreversible aggregation. Plays an important role in the bacterial defense system toward oxidative stress.</text>
</comment>
<comment type="subcellular location">
    <subcellularLocation>
        <location evidence="1">Cytoplasm</location>
    </subcellularLocation>
</comment>
<comment type="PTM">
    <text evidence="1">Under oxidizing conditions two disulfide bonds are formed involving the reactive cysteines. Under reducing conditions zinc is bound to the reactive cysteines and the protein is inactive.</text>
</comment>
<comment type="similarity">
    <text evidence="1">Belongs to the HSP33 family.</text>
</comment>
<gene>
    <name evidence="1" type="primary">hslO</name>
    <name type="ordered locus">Gbem_3554</name>
</gene>